<proteinExistence type="inferred from homology"/>
<keyword id="KW-0143">Chaperone</keyword>
<keyword id="KW-0963">Cytoplasm</keyword>
<name>CH10_FRATN</name>
<organism>
    <name type="scientific">Francisella tularensis subsp. novicida (strain U112)</name>
    <dbReference type="NCBI Taxonomy" id="401614"/>
    <lineage>
        <taxon>Bacteria</taxon>
        <taxon>Pseudomonadati</taxon>
        <taxon>Pseudomonadota</taxon>
        <taxon>Gammaproteobacteria</taxon>
        <taxon>Thiotrichales</taxon>
        <taxon>Francisellaceae</taxon>
        <taxon>Francisella</taxon>
    </lineage>
</organism>
<dbReference type="EMBL" id="CP000439">
    <property type="protein sequence ID" value="ABK90404.1"/>
    <property type="molecule type" value="Genomic_DNA"/>
</dbReference>
<dbReference type="RefSeq" id="WP_003022662.1">
    <property type="nucleotide sequence ID" value="NZ_CP009633.1"/>
</dbReference>
<dbReference type="SMR" id="A0Q839"/>
<dbReference type="KEGG" id="ftn:FTN_1539"/>
<dbReference type="KEGG" id="ftx:AW25_460"/>
<dbReference type="BioCyc" id="FTUL401614:G1G75-1590-MONOMER"/>
<dbReference type="Proteomes" id="UP000000762">
    <property type="component" value="Chromosome"/>
</dbReference>
<dbReference type="GO" id="GO:0005737">
    <property type="term" value="C:cytoplasm"/>
    <property type="evidence" value="ECO:0007669"/>
    <property type="project" value="UniProtKB-SubCell"/>
</dbReference>
<dbReference type="GO" id="GO:0005524">
    <property type="term" value="F:ATP binding"/>
    <property type="evidence" value="ECO:0007669"/>
    <property type="project" value="InterPro"/>
</dbReference>
<dbReference type="GO" id="GO:0046872">
    <property type="term" value="F:metal ion binding"/>
    <property type="evidence" value="ECO:0007669"/>
    <property type="project" value="TreeGrafter"/>
</dbReference>
<dbReference type="GO" id="GO:0044183">
    <property type="term" value="F:protein folding chaperone"/>
    <property type="evidence" value="ECO:0007669"/>
    <property type="project" value="InterPro"/>
</dbReference>
<dbReference type="GO" id="GO:0051087">
    <property type="term" value="F:protein-folding chaperone binding"/>
    <property type="evidence" value="ECO:0007669"/>
    <property type="project" value="TreeGrafter"/>
</dbReference>
<dbReference type="GO" id="GO:0051082">
    <property type="term" value="F:unfolded protein binding"/>
    <property type="evidence" value="ECO:0007669"/>
    <property type="project" value="TreeGrafter"/>
</dbReference>
<dbReference type="GO" id="GO:0051085">
    <property type="term" value="P:chaperone cofactor-dependent protein refolding"/>
    <property type="evidence" value="ECO:0007669"/>
    <property type="project" value="TreeGrafter"/>
</dbReference>
<dbReference type="CDD" id="cd00320">
    <property type="entry name" value="cpn10"/>
    <property type="match status" value="1"/>
</dbReference>
<dbReference type="FunFam" id="2.30.33.40:FF:000001">
    <property type="entry name" value="10 kDa chaperonin"/>
    <property type="match status" value="1"/>
</dbReference>
<dbReference type="Gene3D" id="2.30.33.40">
    <property type="entry name" value="GroES chaperonin"/>
    <property type="match status" value="1"/>
</dbReference>
<dbReference type="HAMAP" id="MF_00580">
    <property type="entry name" value="CH10"/>
    <property type="match status" value="1"/>
</dbReference>
<dbReference type="InterPro" id="IPR020818">
    <property type="entry name" value="Chaperonin_GroES"/>
</dbReference>
<dbReference type="InterPro" id="IPR037124">
    <property type="entry name" value="Chaperonin_GroES_sf"/>
</dbReference>
<dbReference type="InterPro" id="IPR018369">
    <property type="entry name" value="Chaprnonin_Cpn10_CS"/>
</dbReference>
<dbReference type="InterPro" id="IPR011032">
    <property type="entry name" value="GroES-like_sf"/>
</dbReference>
<dbReference type="NCBIfam" id="NF001527">
    <property type="entry name" value="PRK00364.1-2"/>
    <property type="match status" value="1"/>
</dbReference>
<dbReference type="NCBIfam" id="NF001531">
    <property type="entry name" value="PRK00364.2-2"/>
    <property type="match status" value="1"/>
</dbReference>
<dbReference type="NCBIfam" id="NF001533">
    <property type="entry name" value="PRK00364.2-4"/>
    <property type="match status" value="1"/>
</dbReference>
<dbReference type="PANTHER" id="PTHR10772">
    <property type="entry name" value="10 KDA HEAT SHOCK PROTEIN"/>
    <property type="match status" value="1"/>
</dbReference>
<dbReference type="PANTHER" id="PTHR10772:SF58">
    <property type="entry name" value="CO-CHAPERONIN GROES"/>
    <property type="match status" value="1"/>
</dbReference>
<dbReference type="Pfam" id="PF00166">
    <property type="entry name" value="Cpn10"/>
    <property type="match status" value="1"/>
</dbReference>
<dbReference type="PRINTS" id="PR00297">
    <property type="entry name" value="CHAPERONIN10"/>
</dbReference>
<dbReference type="SMART" id="SM00883">
    <property type="entry name" value="Cpn10"/>
    <property type="match status" value="1"/>
</dbReference>
<dbReference type="SUPFAM" id="SSF50129">
    <property type="entry name" value="GroES-like"/>
    <property type="match status" value="1"/>
</dbReference>
<dbReference type="PROSITE" id="PS00681">
    <property type="entry name" value="CHAPERONINS_CPN10"/>
    <property type="match status" value="1"/>
</dbReference>
<reference key="1">
    <citation type="journal article" date="2007" name="Genome Biol.">
        <title>Comparison of Francisella tularensis genomes reveals evolutionary events associated with the emergence of human pathogenic strains.</title>
        <authorList>
            <person name="Rohmer L."/>
            <person name="Fong C."/>
            <person name="Abmayr S."/>
            <person name="Wasnick M."/>
            <person name="Larson Freeman T.J."/>
            <person name="Radey M."/>
            <person name="Guina T."/>
            <person name="Svensson K."/>
            <person name="Hayden H.S."/>
            <person name="Jacobs M."/>
            <person name="Gallagher L.A."/>
            <person name="Manoil C."/>
            <person name="Ernst R.K."/>
            <person name="Drees B."/>
            <person name="Buckley D."/>
            <person name="Haugen E."/>
            <person name="Bovee D."/>
            <person name="Zhou Y."/>
            <person name="Chang J."/>
            <person name="Levy R."/>
            <person name="Lim R."/>
            <person name="Gillett W."/>
            <person name="Guenthener D."/>
            <person name="Kang A."/>
            <person name="Shaffer S.A."/>
            <person name="Taylor G."/>
            <person name="Chen J."/>
            <person name="Gallis B."/>
            <person name="D'Argenio D.A."/>
            <person name="Forsman M."/>
            <person name="Olson M.V."/>
            <person name="Goodlett D.R."/>
            <person name="Kaul R."/>
            <person name="Miller S.I."/>
            <person name="Brittnacher M.J."/>
        </authorList>
    </citation>
    <scope>NUCLEOTIDE SEQUENCE [LARGE SCALE GENOMIC DNA]</scope>
    <source>
        <strain>U112</strain>
    </source>
</reference>
<sequence length="95" mass="10245">MNIRPLQDRVLVRRAEEEKKSAGGIILTGSAQEKPSQGEVVAVGNGKKLDNGTTLPMDVKVGDKVLFGKYSGSEVKVGDETLLMMREEDIMGIIA</sequence>
<comment type="function">
    <text evidence="1">Together with the chaperonin GroEL, plays an essential role in assisting protein folding. The GroEL-GroES system forms a nano-cage that allows encapsulation of the non-native substrate proteins and provides a physical environment optimized to promote and accelerate protein folding. GroES binds to the apical surface of the GroEL ring, thereby capping the opening of the GroEL channel.</text>
</comment>
<comment type="subunit">
    <text evidence="1">Heptamer of 7 subunits arranged in a ring. Interacts with the chaperonin GroEL.</text>
</comment>
<comment type="subcellular location">
    <subcellularLocation>
        <location evidence="1">Cytoplasm</location>
    </subcellularLocation>
</comment>
<comment type="similarity">
    <text evidence="1">Belongs to the GroES chaperonin family.</text>
</comment>
<gene>
    <name evidence="1" type="primary">groES</name>
    <name evidence="1" type="synonym">groS</name>
    <name type="ordered locus">FTN_1539</name>
</gene>
<accession>A0Q839</accession>
<feature type="chain" id="PRO_1000025261" description="Co-chaperonin GroES">
    <location>
        <begin position="1"/>
        <end position="95"/>
    </location>
</feature>
<protein>
    <recommendedName>
        <fullName evidence="1">Co-chaperonin GroES</fullName>
    </recommendedName>
    <alternativeName>
        <fullName evidence="1">10 kDa chaperonin</fullName>
    </alternativeName>
    <alternativeName>
        <fullName evidence="1">Chaperonin-10</fullName>
        <shortName evidence="1">Cpn10</shortName>
    </alternativeName>
</protein>
<evidence type="ECO:0000255" key="1">
    <source>
        <dbReference type="HAMAP-Rule" id="MF_00580"/>
    </source>
</evidence>